<organism>
    <name type="scientific">Psychrobacter cryohalolentis (strain ATCC BAA-1226 / DSM 17306 / VKM B-2378 / K5)</name>
    <dbReference type="NCBI Taxonomy" id="335284"/>
    <lineage>
        <taxon>Bacteria</taxon>
        <taxon>Pseudomonadati</taxon>
        <taxon>Pseudomonadota</taxon>
        <taxon>Gammaproteobacteria</taxon>
        <taxon>Moraxellales</taxon>
        <taxon>Moraxellaceae</taxon>
        <taxon>Psychrobacter</taxon>
    </lineage>
</organism>
<dbReference type="EC" id="2.1.1.182" evidence="1"/>
<dbReference type="EMBL" id="CP000323">
    <property type="protein sequence ID" value="ABE75235.1"/>
    <property type="molecule type" value="Genomic_DNA"/>
</dbReference>
<dbReference type="RefSeq" id="WP_011513787.1">
    <property type="nucleotide sequence ID" value="NC_007969.1"/>
</dbReference>
<dbReference type="SMR" id="Q1QAR8"/>
<dbReference type="STRING" id="335284.Pcryo_1456"/>
<dbReference type="KEGG" id="pcr:Pcryo_1456"/>
<dbReference type="eggNOG" id="COG0030">
    <property type="taxonomic scope" value="Bacteria"/>
</dbReference>
<dbReference type="HOGENOM" id="CLU_041220_0_1_6"/>
<dbReference type="Proteomes" id="UP000002425">
    <property type="component" value="Chromosome"/>
</dbReference>
<dbReference type="GO" id="GO:0005829">
    <property type="term" value="C:cytosol"/>
    <property type="evidence" value="ECO:0007669"/>
    <property type="project" value="TreeGrafter"/>
</dbReference>
<dbReference type="GO" id="GO:0052908">
    <property type="term" value="F:16S rRNA (adenine(1518)-N(6)/adenine(1519)-N(6))-dimethyltransferase activity"/>
    <property type="evidence" value="ECO:0007669"/>
    <property type="project" value="UniProtKB-EC"/>
</dbReference>
<dbReference type="GO" id="GO:0003723">
    <property type="term" value="F:RNA binding"/>
    <property type="evidence" value="ECO:0007669"/>
    <property type="project" value="UniProtKB-KW"/>
</dbReference>
<dbReference type="FunFam" id="1.10.8.100:FF:000001">
    <property type="entry name" value="Ribosomal RNA small subunit methyltransferase A"/>
    <property type="match status" value="1"/>
</dbReference>
<dbReference type="Gene3D" id="1.10.8.100">
    <property type="entry name" value="Ribosomal RNA adenine dimethylase-like, domain 2"/>
    <property type="match status" value="1"/>
</dbReference>
<dbReference type="Gene3D" id="3.40.50.150">
    <property type="entry name" value="Vaccinia Virus protein VP39"/>
    <property type="match status" value="1"/>
</dbReference>
<dbReference type="HAMAP" id="MF_00607">
    <property type="entry name" value="16SrRNA_methyltr_A"/>
    <property type="match status" value="1"/>
</dbReference>
<dbReference type="InterPro" id="IPR001737">
    <property type="entry name" value="KsgA/Erm"/>
</dbReference>
<dbReference type="InterPro" id="IPR023165">
    <property type="entry name" value="rRNA_Ade_diMease-like_C"/>
</dbReference>
<dbReference type="InterPro" id="IPR020596">
    <property type="entry name" value="rRNA_Ade_Mease_Trfase_CS"/>
</dbReference>
<dbReference type="InterPro" id="IPR020598">
    <property type="entry name" value="rRNA_Ade_methylase_Trfase_N"/>
</dbReference>
<dbReference type="InterPro" id="IPR011530">
    <property type="entry name" value="rRNA_adenine_dimethylase"/>
</dbReference>
<dbReference type="InterPro" id="IPR029063">
    <property type="entry name" value="SAM-dependent_MTases_sf"/>
</dbReference>
<dbReference type="NCBIfam" id="TIGR00755">
    <property type="entry name" value="ksgA"/>
    <property type="match status" value="1"/>
</dbReference>
<dbReference type="PANTHER" id="PTHR11727">
    <property type="entry name" value="DIMETHYLADENOSINE TRANSFERASE"/>
    <property type="match status" value="1"/>
</dbReference>
<dbReference type="PANTHER" id="PTHR11727:SF7">
    <property type="entry name" value="DIMETHYLADENOSINE TRANSFERASE-RELATED"/>
    <property type="match status" value="1"/>
</dbReference>
<dbReference type="Pfam" id="PF00398">
    <property type="entry name" value="RrnaAD"/>
    <property type="match status" value="1"/>
</dbReference>
<dbReference type="SMART" id="SM00650">
    <property type="entry name" value="rADc"/>
    <property type="match status" value="1"/>
</dbReference>
<dbReference type="SUPFAM" id="SSF53335">
    <property type="entry name" value="S-adenosyl-L-methionine-dependent methyltransferases"/>
    <property type="match status" value="1"/>
</dbReference>
<dbReference type="PROSITE" id="PS01131">
    <property type="entry name" value="RRNA_A_DIMETH"/>
    <property type="match status" value="1"/>
</dbReference>
<dbReference type="PROSITE" id="PS51689">
    <property type="entry name" value="SAM_RNA_A_N6_MT"/>
    <property type="match status" value="1"/>
</dbReference>
<keyword id="KW-0963">Cytoplasm</keyword>
<keyword id="KW-0489">Methyltransferase</keyword>
<keyword id="KW-0694">RNA-binding</keyword>
<keyword id="KW-0698">rRNA processing</keyword>
<keyword id="KW-0949">S-adenosyl-L-methionine</keyword>
<keyword id="KW-0808">Transferase</keyword>
<name>RSMA_PSYCK</name>
<sequence>MSKTTFDAQSITNSLRAAKHQPRKRFGQNFLHDRSVIREIVESIRLERDDNLIEIGPGMGALTEPLLAEVDAMTVVELDRDLADSLRIRIGANSHPNFEIIKNNAMHVDYRELYSDERGKLRVVGNLPYNISTPILFHLLSYADVIEDMHFMLQKEVVERITADVGSKTYGRLSVIMQYHCHTDYLLTVPRGAFNPPPKVTSAVFRLTPHIIKPVVAEDEEYFALVVRETFNHRRKTLRAIFKKSTLLPTLSEDDFAACAIDPQARPETLSVKDFVNLSNQARKVEG</sequence>
<proteinExistence type="inferred from homology"/>
<feature type="chain" id="PRO_0000257327" description="Ribosomal RNA small subunit methyltransferase A">
    <location>
        <begin position="1"/>
        <end position="287"/>
    </location>
</feature>
<feature type="region of interest" description="Disordered" evidence="2">
    <location>
        <begin position="1"/>
        <end position="20"/>
    </location>
</feature>
<feature type="compositionally biased region" description="Polar residues" evidence="2">
    <location>
        <begin position="1"/>
        <end position="15"/>
    </location>
</feature>
<feature type="binding site" evidence="1">
    <location>
        <position position="29"/>
    </location>
    <ligand>
        <name>S-adenosyl-L-methionine</name>
        <dbReference type="ChEBI" id="CHEBI:59789"/>
    </ligand>
</feature>
<feature type="binding site" evidence="1">
    <location>
        <position position="31"/>
    </location>
    <ligand>
        <name>S-adenosyl-L-methionine</name>
        <dbReference type="ChEBI" id="CHEBI:59789"/>
    </ligand>
</feature>
<feature type="binding site" evidence="1">
    <location>
        <position position="56"/>
    </location>
    <ligand>
        <name>S-adenosyl-L-methionine</name>
        <dbReference type="ChEBI" id="CHEBI:59789"/>
    </ligand>
</feature>
<feature type="binding site" evidence="1">
    <location>
        <position position="77"/>
    </location>
    <ligand>
        <name>S-adenosyl-L-methionine</name>
        <dbReference type="ChEBI" id="CHEBI:59789"/>
    </ligand>
</feature>
<feature type="binding site" evidence="1">
    <location>
        <position position="126"/>
    </location>
    <ligand>
        <name>S-adenosyl-L-methionine</name>
        <dbReference type="ChEBI" id="CHEBI:59789"/>
    </ligand>
</feature>
<comment type="function">
    <text evidence="1">Specifically dimethylates two adjacent adenosines (A1518 and A1519) in the loop of a conserved hairpin near the 3'-end of 16S rRNA in the 30S particle. May play a critical role in biogenesis of 30S subunits.</text>
</comment>
<comment type="catalytic activity">
    <reaction evidence="1">
        <text>adenosine(1518)/adenosine(1519) in 16S rRNA + 4 S-adenosyl-L-methionine = N(6)-dimethyladenosine(1518)/N(6)-dimethyladenosine(1519) in 16S rRNA + 4 S-adenosyl-L-homocysteine + 4 H(+)</text>
        <dbReference type="Rhea" id="RHEA:19609"/>
        <dbReference type="Rhea" id="RHEA-COMP:10232"/>
        <dbReference type="Rhea" id="RHEA-COMP:10233"/>
        <dbReference type="ChEBI" id="CHEBI:15378"/>
        <dbReference type="ChEBI" id="CHEBI:57856"/>
        <dbReference type="ChEBI" id="CHEBI:59789"/>
        <dbReference type="ChEBI" id="CHEBI:74411"/>
        <dbReference type="ChEBI" id="CHEBI:74493"/>
        <dbReference type="EC" id="2.1.1.182"/>
    </reaction>
</comment>
<comment type="subcellular location">
    <subcellularLocation>
        <location evidence="1">Cytoplasm</location>
    </subcellularLocation>
</comment>
<comment type="similarity">
    <text evidence="1">Belongs to the class I-like SAM-binding methyltransferase superfamily. rRNA adenine N(6)-methyltransferase family. RsmA subfamily.</text>
</comment>
<protein>
    <recommendedName>
        <fullName evidence="1">Ribosomal RNA small subunit methyltransferase A</fullName>
        <ecNumber evidence="1">2.1.1.182</ecNumber>
    </recommendedName>
    <alternativeName>
        <fullName evidence="1">16S rRNA (adenine(1518)-N(6)/adenine(1519)-N(6))-dimethyltransferase</fullName>
    </alternativeName>
    <alternativeName>
        <fullName evidence="1">16S rRNA dimethyladenosine transferase</fullName>
    </alternativeName>
    <alternativeName>
        <fullName evidence="1">16S rRNA dimethylase</fullName>
    </alternativeName>
    <alternativeName>
        <fullName evidence="1">S-adenosylmethionine-6-N', N'-adenosyl(rRNA) dimethyltransferase</fullName>
    </alternativeName>
</protein>
<gene>
    <name evidence="1" type="primary">rsmA</name>
    <name evidence="1" type="synonym">ksgA</name>
    <name type="ordered locus">Pcryo_1456</name>
</gene>
<reference key="1">
    <citation type="submission" date="2006-03" db="EMBL/GenBank/DDBJ databases">
        <title>Complete sequence of chromosome of Psychrobacter cryohalolentis K5.</title>
        <authorList>
            <consortium name="US DOE Joint Genome Institute"/>
            <person name="Copeland A."/>
            <person name="Lucas S."/>
            <person name="Lapidus A."/>
            <person name="Barry K."/>
            <person name="Detter J.C."/>
            <person name="Glavina T."/>
            <person name="Hammon N."/>
            <person name="Israni S."/>
            <person name="Dalin E."/>
            <person name="Tice H."/>
            <person name="Pitluck S."/>
            <person name="Brettin T."/>
            <person name="Bruce D."/>
            <person name="Han C."/>
            <person name="Tapia R."/>
            <person name="Sims D.R."/>
            <person name="Gilna P."/>
            <person name="Schmutz J."/>
            <person name="Larimer F."/>
            <person name="Land M."/>
            <person name="Hauser L."/>
            <person name="Kyrpides N."/>
            <person name="Kim E."/>
            <person name="Richardson P."/>
        </authorList>
    </citation>
    <scope>NUCLEOTIDE SEQUENCE [LARGE SCALE GENOMIC DNA]</scope>
    <source>
        <strain>ATCC BAA-1226 / DSM 17306 / VKM B-2378 / K5</strain>
    </source>
</reference>
<evidence type="ECO:0000255" key="1">
    <source>
        <dbReference type="HAMAP-Rule" id="MF_00607"/>
    </source>
</evidence>
<evidence type="ECO:0000256" key="2">
    <source>
        <dbReference type="SAM" id="MobiDB-lite"/>
    </source>
</evidence>
<accession>Q1QAR8</accession>